<comment type="function">
    <text evidence="3">This magnesium-dependent enzyme catalyzes the hydrolysis of ATP coupled with the transport of calcium. Transports calcium ions from the cytosol into the sarcoplasmic/endoplasmic reticulum lumen. Contributes to calcium sequestration involved in muscular excitation/contraction.</text>
</comment>
<comment type="catalytic activity">
    <reaction evidence="3">
        <text>Ca(2+)(in) + ATP + H2O = Ca(2+)(out) + ADP + phosphate + H(+)</text>
        <dbReference type="Rhea" id="RHEA:18105"/>
        <dbReference type="ChEBI" id="CHEBI:15377"/>
        <dbReference type="ChEBI" id="CHEBI:15378"/>
        <dbReference type="ChEBI" id="CHEBI:29108"/>
        <dbReference type="ChEBI" id="CHEBI:30616"/>
        <dbReference type="ChEBI" id="CHEBI:43474"/>
        <dbReference type="ChEBI" id="CHEBI:456216"/>
        <dbReference type="EC" id="7.2.2.10"/>
    </reaction>
    <physiologicalReaction direction="left-to-right" evidence="3">
        <dbReference type="Rhea" id="RHEA:18106"/>
    </physiologicalReaction>
</comment>
<comment type="cofactor">
    <cofactor evidence="1">
        <name>Mg(2+)</name>
        <dbReference type="ChEBI" id="CHEBI:18420"/>
    </cofactor>
</comment>
<comment type="activity regulation">
    <text evidence="1 2">Inhibited by sarcolipin (SLN), phospholamban (PLN) and myoregulin (MRLN) (By similarity). Enhanced by DWORF; DWORF increases activity by displacing sarcolipin (SLN), phospholamban (PLN) and myoregulin (MRLN) (By similarity).</text>
</comment>
<comment type="subunit">
    <text evidence="1 2">Interacts with sarcolipin (SLN) (By similarity). Interacts with phospholamban (PLN) (By similarity). Interacts with myoregulin (MRLN). Interacts with DWORF (By similarity).</text>
</comment>
<comment type="subcellular location">
    <subcellularLocation>
        <location evidence="3">Endoplasmic reticulum membrane</location>
        <topology evidence="3">Multi-pass membrane protein</topology>
    </subcellularLocation>
    <subcellularLocation>
        <location evidence="3">Sarcoplasmic reticulum membrane</location>
        <topology evidence="3">Multi-pass membrane protein</topology>
    </subcellularLocation>
</comment>
<comment type="alternative products">
    <event type="alternative splicing"/>
    <isoform>
        <id>Q9YGL9-2</id>
        <name>SERCA3A</name>
        <sequence type="displayed"/>
    </isoform>
    <isoform>
        <id>Q9YGL9-1</id>
        <name>SERCA3B</name>
        <sequence type="described" ref="VSP_060853"/>
    </isoform>
</comment>
<comment type="tissue specificity">
    <text>Found in spleen, lung, intestine and brain.</text>
</comment>
<comment type="induction">
    <text>Down-regulated by 1,25-dihydroxyvitamin D3.</text>
</comment>
<comment type="similarity">
    <text evidence="4">Belongs to the cation transport ATPase (P-type) (TC 3.A.3) family. Type IIA subfamily.</text>
</comment>
<accession>Q9YGL9</accession>
<name>AT2A3_CHICK</name>
<sequence>MEAAHSVPVQDVLSRFGVAESCGLSPEQVRRNREKYGPNELPAEERKSLWELVLEQFEDLLVRILLMAAFLSFILAWFEEGEESTTAFVEPIVIIMILIANAVVGVWQERNAESAIEALKEYEPEMGKVIRADRSGVQRIRARDIVPGDIVEVAVGDKVPADIRIIEIRSTTLRVDQSILTGESMSVIKHADPIPDPRAVNQDKKNMLFSGTNIAAGKAVGIVIATGVYTEIGKIRNQMVETEPEKTPLQQKLDEFSQQLSKVIFLVCIAVWVINISHFSDPVHGGSWFRGAIYYFKTSVALAVAAIPEGLPAVITTCLALGTRRMAKKNAIVRSLPSVETLGCTSVICSDKTGTLTTNQMSVCRMFIMEKVEGTQCSLHEFSITGSTYAPEGQILKDEKPVRCGQYDGLVELATICALCNDSSLDYNESKKVYEKVGEATETALTCLVEKMNVFDTDTSKLSKVERANACNSVIKHLMRKECTLEFSRDRKSMSVYCTPTGPGHNSAGSKMFVKGAPESVIERCTHVRVGTAKVPLTPPVREKILSQIRDWGMGTDTLRCLALATHDAPVQRETMQLHDSTTFTHYETNLTFVGCVGMLDPPRKEVTSSIEMCRKAGIRVIMITGDNKGTAVAICRRIGIFTESEDVAGKAYTGREFDELSPEAQRQACREARCFARVEPAHKSRIVEYLQSFNEITAMTGDGVNDAPALKKAEIGIAMGSGTAVAKSAAEMVLSDDNFSTIVSAVEEGRAIYNNMKQFIRYLISSNVGEVVCIFLTAILGLPEALIPVQLLWVNLVTDGLPATALGFNPPDLDIMDKLPRNPKEPLISGWLFFRYLAIGVYVGLATVGAATWWFLYDAEGPQVSFHQLRNFMRCTEDNPIFEGVNCEIFESRYPTTMALSVLVTIEMCNALNSVSENQSLLRMPPWLNIWLLGAIVMSMALHFFILYVKPMPLIFQVTPLSWPQWVVVLKISLPVILLDEGLKYLSRNHLEGEEDKK</sequence>
<protein>
    <recommendedName>
        <fullName>Sarcoplasmic/endoplasmic reticulum calcium ATPase 3</fullName>
        <shortName>ChkSERCA3</shortName>
        <shortName>SERCA3</shortName>
        <shortName>SR Ca(2+)-ATPase 3</shortName>
        <ecNumber>7.2.2.10</ecNumber>
    </recommendedName>
    <alternativeName>
        <fullName>Calcium pump 3</fullName>
    </alternativeName>
</protein>
<evidence type="ECO:0000250" key="1">
    <source>
        <dbReference type="UniProtKB" id="P04191"/>
    </source>
</evidence>
<evidence type="ECO:0000250" key="2">
    <source>
        <dbReference type="UniProtKB" id="Q8R429"/>
    </source>
</evidence>
<evidence type="ECO:0000250" key="3">
    <source>
        <dbReference type="UniProtKB" id="Q93084"/>
    </source>
</evidence>
<evidence type="ECO:0000305" key="4"/>
<gene>
    <name type="primary">ATP2A3</name>
</gene>
<dbReference type="EC" id="7.2.2.10"/>
<dbReference type="EMBL" id="Y18063">
    <property type="protein sequence ID" value="CAB38029.1"/>
    <property type="molecule type" value="mRNA"/>
</dbReference>
<dbReference type="RefSeq" id="NP_990222.1">
    <molecule id="Q9YGL9-1"/>
    <property type="nucleotide sequence ID" value="NM_204891.2"/>
</dbReference>
<dbReference type="RefSeq" id="XP_015151158.3">
    <molecule id="Q9YGL9-2"/>
    <property type="nucleotide sequence ID" value="XM_015295672.4"/>
</dbReference>
<dbReference type="RefSeq" id="XP_046785864.1">
    <molecule id="Q9YGL9-2"/>
    <property type="nucleotide sequence ID" value="XM_046929908.1"/>
</dbReference>
<dbReference type="SMR" id="Q9YGL9"/>
<dbReference type="FunCoup" id="Q9YGL9">
    <property type="interactions" value="369"/>
</dbReference>
<dbReference type="STRING" id="9031.ENSGALP00000002373"/>
<dbReference type="PaxDb" id="9031-ENSGALP00000002373"/>
<dbReference type="Ensembl" id="ENSGALT00010071491.1">
    <molecule id="Q9YGL9-2"/>
    <property type="protein sequence ID" value="ENSGALP00010044181.1"/>
    <property type="gene ID" value="ENSGALG00010029576.1"/>
</dbReference>
<dbReference type="Ensembl" id="ENSGALT00010071492.1">
    <molecule id="Q9YGL9-1"/>
    <property type="protein sequence ID" value="ENSGALP00010044182.1"/>
    <property type="gene ID" value="ENSGALG00010029576.1"/>
</dbReference>
<dbReference type="GeneID" id="395707"/>
<dbReference type="KEGG" id="gga:395707"/>
<dbReference type="CTD" id="489"/>
<dbReference type="VEuPathDB" id="HostDB:geneid_395707"/>
<dbReference type="eggNOG" id="KOG0202">
    <property type="taxonomic scope" value="Eukaryota"/>
</dbReference>
<dbReference type="GeneTree" id="ENSGT00940000155668"/>
<dbReference type="InParanoid" id="Q9YGL9"/>
<dbReference type="OMA" id="VCCGQFD"/>
<dbReference type="OrthoDB" id="3352408at2759"/>
<dbReference type="PhylomeDB" id="Q9YGL9"/>
<dbReference type="PRO" id="PR:Q9YGL9"/>
<dbReference type="Proteomes" id="UP000000539">
    <property type="component" value="Chromosome 19"/>
</dbReference>
<dbReference type="GO" id="GO:0016020">
    <property type="term" value="C:membrane"/>
    <property type="evidence" value="ECO:0000318"/>
    <property type="project" value="GO_Central"/>
</dbReference>
<dbReference type="GO" id="GO:0033017">
    <property type="term" value="C:sarcoplasmic reticulum membrane"/>
    <property type="evidence" value="ECO:0007669"/>
    <property type="project" value="UniProtKB-SubCell"/>
</dbReference>
<dbReference type="GO" id="GO:0005524">
    <property type="term" value="F:ATP binding"/>
    <property type="evidence" value="ECO:0007669"/>
    <property type="project" value="UniProtKB-KW"/>
</dbReference>
<dbReference type="GO" id="GO:0016887">
    <property type="term" value="F:ATP hydrolysis activity"/>
    <property type="evidence" value="ECO:0007669"/>
    <property type="project" value="InterPro"/>
</dbReference>
<dbReference type="GO" id="GO:0005246">
    <property type="term" value="F:calcium channel regulator activity"/>
    <property type="evidence" value="ECO:0007669"/>
    <property type="project" value="Ensembl"/>
</dbReference>
<dbReference type="GO" id="GO:0030899">
    <property type="term" value="F:calcium-dependent ATPase activity"/>
    <property type="evidence" value="ECO:0007669"/>
    <property type="project" value="Ensembl"/>
</dbReference>
<dbReference type="GO" id="GO:0008656">
    <property type="term" value="F:cysteine-type endopeptidase activator activity involved in apoptotic process"/>
    <property type="evidence" value="ECO:0007669"/>
    <property type="project" value="Ensembl"/>
</dbReference>
<dbReference type="GO" id="GO:0046872">
    <property type="term" value="F:metal ion binding"/>
    <property type="evidence" value="ECO:0007669"/>
    <property type="project" value="UniProtKB-KW"/>
</dbReference>
<dbReference type="GO" id="GO:0005388">
    <property type="term" value="F:P-type calcium transporter activity"/>
    <property type="evidence" value="ECO:0000318"/>
    <property type="project" value="GO_Central"/>
</dbReference>
<dbReference type="GO" id="GO:0044325">
    <property type="term" value="F:transmembrane transporter binding"/>
    <property type="evidence" value="ECO:0007669"/>
    <property type="project" value="Ensembl"/>
</dbReference>
<dbReference type="GO" id="GO:0070588">
    <property type="term" value="P:calcium ion transmembrane transport"/>
    <property type="evidence" value="ECO:0000318"/>
    <property type="project" value="GO_Central"/>
</dbReference>
<dbReference type="GO" id="GO:1903515">
    <property type="term" value="P:calcium ion transport from cytosol to endoplasmic reticulum"/>
    <property type="evidence" value="ECO:0007669"/>
    <property type="project" value="Ensembl"/>
</dbReference>
<dbReference type="GO" id="GO:0006874">
    <property type="term" value="P:intracellular calcium ion homeostasis"/>
    <property type="evidence" value="ECO:0000318"/>
    <property type="project" value="GO_Central"/>
</dbReference>
<dbReference type="GO" id="GO:0070059">
    <property type="term" value="P:intrinsic apoptotic signaling pathway in response to endoplasmic reticulum stress"/>
    <property type="evidence" value="ECO:0007669"/>
    <property type="project" value="Ensembl"/>
</dbReference>
<dbReference type="CDD" id="cd02083">
    <property type="entry name" value="P-type_ATPase_SERCA"/>
    <property type="match status" value="1"/>
</dbReference>
<dbReference type="FunFam" id="3.40.1110.10:FF:000003">
    <property type="entry name" value="Calcium-transporting ATPase"/>
    <property type="match status" value="1"/>
</dbReference>
<dbReference type="FunFam" id="3.40.50.1000:FF:000005">
    <property type="entry name" value="Calcium-transporting ATPase 1"/>
    <property type="match status" value="1"/>
</dbReference>
<dbReference type="FunFam" id="1.20.1110.10:FF:000065">
    <property type="entry name" value="Sarcoplasmic/endoplasmic reticulum calcium ATPase 1"/>
    <property type="match status" value="3"/>
</dbReference>
<dbReference type="FunFam" id="2.70.150.10:FF:000160">
    <property type="entry name" value="Sarcoplasmic/endoplasmic reticulum calcium ATPase 1"/>
    <property type="match status" value="1"/>
</dbReference>
<dbReference type="Gene3D" id="3.40.1110.10">
    <property type="entry name" value="Calcium-transporting ATPase, cytoplasmic domain N"/>
    <property type="match status" value="1"/>
</dbReference>
<dbReference type="Gene3D" id="2.70.150.10">
    <property type="entry name" value="Calcium-transporting ATPase, cytoplasmic transduction domain A"/>
    <property type="match status" value="1"/>
</dbReference>
<dbReference type="Gene3D" id="1.20.1110.10">
    <property type="entry name" value="Calcium-transporting ATPase, transmembrane domain"/>
    <property type="match status" value="1"/>
</dbReference>
<dbReference type="Gene3D" id="3.40.50.1000">
    <property type="entry name" value="HAD superfamily/HAD-like"/>
    <property type="match status" value="1"/>
</dbReference>
<dbReference type="InterPro" id="IPR006068">
    <property type="entry name" value="ATPase_P-typ_cation-transptr_C"/>
</dbReference>
<dbReference type="InterPro" id="IPR004014">
    <property type="entry name" value="ATPase_P-typ_cation-transptr_N"/>
</dbReference>
<dbReference type="InterPro" id="IPR023299">
    <property type="entry name" value="ATPase_P-typ_cyto_dom_N"/>
</dbReference>
<dbReference type="InterPro" id="IPR018303">
    <property type="entry name" value="ATPase_P-typ_P_site"/>
</dbReference>
<dbReference type="InterPro" id="IPR023298">
    <property type="entry name" value="ATPase_P-typ_TM_dom_sf"/>
</dbReference>
<dbReference type="InterPro" id="IPR008250">
    <property type="entry name" value="ATPase_P-typ_transduc_dom_A_sf"/>
</dbReference>
<dbReference type="InterPro" id="IPR036412">
    <property type="entry name" value="HAD-like_sf"/>
</dbReference>
<dbReference type="InterPro" id="IPR023214">
    <property type="entry name" value="HAD_sf"/>
</dbReference>
<dbReference type="InterPro" id="IPR005782">
    <property type="entry name" value="P-type_ATPase_IIA"/>
</dbReference>
<dbReference type="InterPro" id="IPR001757">
    <property type="entry name" value="P_typ_ATPase"/>
</dbReference>
<dbReference type="InterPro" id="IPR044492">
    <property type="entry name" value="P_typ_ATPase_HD_dom"/>
</dbReference>
<dbReference type="NCBIfam" id="TIGR01116">
    <property type="entry name" value="ATPase-IIA1_Ca"/>
    <property type="match status" value="1"/>
</dbReference>
<dbReference type="NCBIfam" id="TIGR01494">
    <property type="entry name" value="ATPase_P-type"/>
    <property type="match status" value="2"/>
</dbReference>
<dbReference type="PANTHER" id="PTHR42861">
    <property type="entry name" value="CALCIUM-TRANSPORTING ATPASE"/>
    <property type="match status" value="1"/>
</dbReference>
<dbReference type="Pfam" id="PF13246">
    <property type="entry name" value="Cation_ATPase"/>
    <property type="match status" value="1"/>
</dbReference>
<dbReference type="Pfam" id="PF00689">
    <property type="entry name" value="Cation_ATPase_C"/>
    <property type="match status" value="1"/>
</dbReference>
<dbReference type="Pfam" id="PF00690">
    <property type="entry name" value="Cation_ATPase_N"/>
    <property type="match status" value="1"/>
</dbReference>
<dbReference type="Pfam" id="PF00122">
    <property type="entry name" value="E1-E2_ATPase"/>
    <property type="match status" value="1"/>
</dbReference>
<dbReference type="Pfam" id="PF00702">
    <property type="entry name" value="Hydrolase"/>
    <property type="match status" value="1"/>
</dbReference>
<dbReference type="PRINTS" id="PR00119">
    <property type="entry name" value="CATATPASE"/>
</dbReference>
<dbReference type="PRINTS" id="PR00121">
    <property type="entry name" value="NAKATPASE"/>
</dbReference>
<dbReference type="SFLD" id="SFLDG00002">
    <property type="entry name" value="C1.7:_P-type_atpase_like"/>
    <property type="match status" value="1"/>
</dbReference>
<dbReference type="SFLD" id="SFLDF00027">
    <property type="entry name" value="p-type_atpase"/>
    <property type="match status" value="1"/>
</dbReference>
<dbReference type="SMART" id="SM00831">
    <property type="entry name" value="Cation_ATPase_N"/>
    <property type="match status" value="1"/>
</dbReference>
<dbReference type="SUPFAM" id="SSF81653">
    <property type="entry name" value="Calcium ATPase, transduction domain A"/>
    <property type="match status" value="1"/>
</dbReference>
<dbReference type="SUPFAM" id="SSF81665">
    <property type="entry name" value="Calcium ATPase, transmembrane domain M"/>
    <property type="match status" value="1"/>
</dbReference>
<dbReference type="SUPFAM" id="SSF56784">
    <property type="entry name" value="HAD-like"/>
    <property type="match status" value="1"/>
</dbReference>
<dbReference type="SUPFAM" id="SSF81660">
    <property type="entry name" value="Metal cation-transporting ATPase, ATP-binding domain N"/>
    <property type="match status" value="1"/>
</dbReference>
<dbReference type="PROSITE" id="PS00154">
    <property type="entry name" value="ATPASE_E1_E2"/>
    <property type="match status" value="1"/>
</dbReference>
<keyword id="KW-0025">Alternative splicing</keyword>
<keyword id="KW-0067">ATP-binding</keyword>
<keyword id="KW-0106">Calcium</keyword>
<keyword id="KW-0109">Calcium transport</keyword>
<keyword id="KW-0256">Endoplasmic reticulum</keyword>
<keyword id="KW-0406">Ion transport</keyword>
<keyword id="KW-0460">Magnesium</keyword>
<keyword id="KW-0472">Membrane</keyword>
<keyword id="KW-0479">Metal-binding</keyword>
<keyword id="KW-0547">Nucleotide-binding</keyword>
<keyword id="KW-0597">Phosphoprotein</keyword>
<keyword id="KW-1185">Reference proteome</keyword>
<keyword id="KW-0703">Sarcoplasmic reticulum</keyword>
<keyword id="KW-1278">Translocase</keyword>
<keyword id="KW-0812">Transmembrane</keyword>
<keyword id="KW-1133">Transmembrane helix</keyword>
<keyword id="KW-0813">Transport</keyword>
<organism>
    <name type="scientific">Gallus gallus</name>
    <name type="common">Chicken</name>
    <dbReference type="NCBI Taxonomy" id="9031"/>
    <lineage>
        <taxon>Eukaryota</taxon>
        <taxon>Metazoa</taxon>
        <taxon>Chordata</taxon>
        <taxon>Craniata</taxon>
        <taxon>Vertebrata</taxon>
        <taxon>Euteleostomi</taxon>
        <taxon>Archelosauria</taxon>
        <taxon>Archosauria</taxon>
        <taxon>Dinosauria</taxon>
        <taxon>Saurischia</taxon>
        <taxon>Theropoda</taxon>
        <taxon>Coelurosauria</taxon>
        <taxon>Aves</taxon>
        <taxon>Neognathae</taxon>
        <taxon>Galloanserae</taxon>
        <taxon>Galliformes</taxon>
        <taxon>Phasianidae</taxon>
        <taxon>Phasianinae</taxon>
        <taxon>Gallus</taxon>
    </lineage>
</organism>
<reference key="1">
    <citation type="journal article" date="1999" name="Exp. Cell Res.">
        <title>Identification of avian sarcoplasmic reticulum Ca(2+)-ATPase (SERCA3) as a novel 1,25(OH)(2)D(3) target gene in the monocytic lineage.</title>
        <authorList>
            <person name="Machuca I."/>
            <person name="Domenget C."/>
            <person name="Jurdic P."/>
        </authorList>
    </citation>
    <scope>NUCLEOTIDE SEQUENCE [MRNA] (ISOFORMS SERCA3A AND SERCA3B)</scope>
    <source>
        <strain>SPAFAS</strain>
        <tissue>Macrophage</tissue>
    </source>
</reference>
<proteinExistence type="evidence at transcript level"/>
<feature type="chain" id="PRO_0000046206" description="Sarcoplasmic/endoplasmic reticulum calcium ATPase 3">
    <location>
        <begin position="1"/>
        <end position="999"/>
    </location>
</feature>
<feature type="topological domain" description="Cytoplasmic" evidence="1">
    <location>
        <begin position="1"/>
        <end position="48"/>
    </location>
</feature>
<feature type="transmembrane region" description="Helical; Name=1" evidence="1">
    <location>
        <begin position="49"/>
        <end position="69"/>
    </location>
</feature>
<feature type="topological domain" description="Lumenal" evidence="1">
    <location>
        <begin position="70"/>
        <end position="89"/>
    </location>
</feature>
<feature type="transmembrane region" description="Helical; Name=2" evidence="1">
    <location>
        <begin position="90"/>
        <end position="110"/>
    </location>
</feature>
<feature type="topological domain" description="Cytoplasmic" evidence="1">
    <location>
        <begin position="111"/>
        <end position="253"/>
    </location>
</feature>
<feature type="transmembrane region" description="Helical; Name=3" evidence="1">
    <location>
        <begin position="254"/>
        <end position="273"/>
    </location>
</feature>
<feature type="topological domain" description="Lumenal" evidence="1">
    <location>
        <begin position="274"/>
        <end position="295"/>
    </location>
</feature>
<feature type="transmembrane region" description="Helical; Name=4" evidence="1">
    <location>
        <begin position="296"/>
        <end position="313"/>
    </location>
</feature>
<feature type="topological domain" description="Cytoplasmic" evidence="1">
    <location>
        <begin position="314"/>
        <end position="757"/>
    </location>
</feature>
<feature type="transmembrane region" description="Helical; Name=5" evidence="1">
    <location>
        <begin position="758"/>
        <end position="777"/>
    </location>
</feature>
<feature type="topological domain" description="Lumenal" evidence="1">
    <location>
        <begin position="778"/>
        <end position="787"/>
    </location>
</feature>
<feature type="transmembrane region" description="Helical; Name=6" evidence="1">
    <location>
        <begin position="788"/>
        <end position="808"/>
    </location>
</feature>
<feature type="topological domain" description="Cytoplasmic" evidence="1">
    <location>
        <begin position="809"/>
        <end position="828"/>
    </location>
</feature>
<feature type="transmembrane region" description="Helical; Name=7" evidence="1">
    <location>
        <begin position="829"/>
        <end position="851"/>
    </location>
</feature>
<feature type="topological domain" description="Lumenal" evidence="1">
    <location>
        <begin position="852"/>
        <end position="897"/>
    </location>
</feature>
<feature type="transmembrane region" description="Helical; Name=8" evidence="1">
    <location>
        <begin position="898"/>
        <end position="917"/>
    </location>
</feature>
<feature type="topological domain" description="Cytoplasmic" evidence="1">
    <location>
        <begin position="918"/>
        <end position="930"/>
    </location>
</feature>
<feature type="transmembrane region" description="Helical; Name=9" evidence="1">
    <location>
        <begin position="931"/>
        <end position="949"/>
    </location>
</feature>
<feature type="topological domain" description="Lumenal" evidence="1">
    <location>
        <begin position="950"/>
        <end position="964"/>
    </location>
</feature>
<feature type="transmembrane region" description="Helical; Name=10" evidence="1">
    <location>
        <begin position="965"/>
        <end position="985"/>
    </location>
</feature>
<feature type="topological domain" description="Cytoplasmic" evidence="1">
    <location>
        <begin position="986"/>
        <end position="999"/>
    </location>
</feature>
<feature type="region of interest" description="Interaction with phospholamban 1" evidence="1">
    <location>
        <begin position="370"/>
        <end position="400"/>
    </location>
</feature>
<feature type="region of interest" description="Interaction with phospholamban 2" evidence="1">
    <location>
        <begin position="788"/>
        <end position="808"/>
    </location>
</feature>
<feature type="active site" description="4-aspartylphosphate intermediate" evidence="1">
    <location>
        <position position="351"/>
    </location>
</feature>
<feature type="binding site" evidence="1">
    <location>
        <position position="304"/>
    </location>
    <ligand>
        <name>Ca(2+)</name>
        <dbReference type="ChEBI" id="CHEBI:29108"/>
        <label>2</label>
    </ligand>
</feature>
<feature type="binding site" evidence="1">
    <location>
        <position position="305"/>
    </location>
    <ligand>
        <name>Ca(2+)</name>
        <dbReference type="ChEBI" id="CHEBI:29108"/>
        <label>2</label>
    </ligand>
</feature>
<feature type="binding site" evidence="1">
    <location>
        <position position="307"/>
    </location>
    <ligand>
        <name>Ca(2+)</name>
        <dbReference type="ChEBI" id="CHEBI:29108"/>
        <label>2</label>
    </ligand>
</feature>
<feature type="binding site" evidence="1">
    <location>
        <position position="309"/>
    </location>
    <ligand>
        <name>Ca(2+)</name>
        <dbReference type="ChEBI" id="CHEBI:29108"/>
        <label>2</label>
    </ligand>
</feature>
<feature type="binding site" evidence="1">
    <location>
        <position position="351"/>
    </location>
    <ligand>
        <name>Mg(2+)</name>
        <dbReference type="ChEBI" id="CHEBI:18420"/>
    </ligand>
</feature>
<feature type="binding site" evidence="1">
    <location>
        <position position="353"/>
    </location>
    <ligand>
        <name>ATP</name>
        <dbReference type="ChEBI" id="CHEBI:30616"/>
    </ligand>
</feature>
<feature type="binding site" evidence="1">
    <location>
        <position position="353"/>
    </location>
    <ligand>
        <name>Mg(2+)</name>
        <dbReference type="ChEBI" id="CHEBI:18420"/>
    </ligand>
</feature>
<feature type="binding site" evidence="1">
    <location>
        <position position="442"/>
    </location>
    <ligand>
        <name>ATP</name>
        <dbReference type="ChEBI" id="CHEBI:30616"/>
    </ligand>
</feature>
<feature type="binding site" evidence="1">
    <location>
        <position position="489"/>
    </location>
    <ligand>
        <name>ATP</name>
        <dbReference type="ChEBI" id="CHEBI:30616"/>
    </ligand>
</feature>
<feature type="binding site" evidence="1">
    <location>
        <position position="515"/>
    </location>
    <ligand>
        <name>ATP</name>
        <dbReference type="ChEBI" id="CHEBI:30616"/>
    </ligand>
</feature>
<feature type="binding site" evidence="1">
    <location>
        <position position="560"/>
    </location>
    <ligand>
        <name>ATP</name>
        <dbReference type="ChEBI" id="CHEBI:30616"/>
    </ligand>
</feature>
<feature type="binding site" evidence="1">
    <location>
        <position position="625"/>
    </location>
    <ligand>
        <name>ATP</name>
        <dbReference type="ChEBI" id="CHEBI:30616"/>
    </ligand>
</feature>
<feature type="binding site" evidence="1">
    <location>
        <position position="626"/>
    </location>
    <ligand>
        <name>ATP</name>
        <dbReference type="ChEBI" id="CHEBI:30616"/>
    </ligand>
</feature>
<feature type="binding site" evidence="1">
    <location>
        <position position="627"/>
    </location>
    <ligand>
        <name>ATP</name>
        <dbReference type="ChEBI" id="CHEBI:30616"/>
    </ligand>
</feature>
<feature type="binding site" evidence="1">
    <location>
        <position position="678"/>
    </location>
    <ligand>
        <name>ATP</name>
        <dbReference type="ChEBI" id="CHEBI:30616"/>
    </ligand>
</feature>
<feature type="binding site" evidence="1">
    <location>
        <position position="684"/>
    </location>
    <ligand>
        <name>ATP</name>
        <dbReference type="ChEBI" id="CHEBI:30616"/>
    </ligand>
</feature>
<feature type="binding site" evidence="1">
    <location>
        <position position="703"/>
    </location>
    <ligand>
        <name>Mg(2+)</name>
        <dbReference type="ChEBI" id="CHEBI:18420"/>
    </ligand>
</feature>
<feature type="binding site" evidence="1">
    <location>
        <position position="706"/>
    </location>
    <ligand>
        <name>ATP</name>
        <dbReference type="ChEBI" id="CHEBI:30616"/>
    </ligand>
</feature>
<feature type="binding site" evidence="1">
    <location>
        <position position="768"/>
    </location>
    <ligand>
        <name>Ca(2+)</name>
        <dbReference type="ChEBI" id="CHEBI:29108"/>
        <label>1</label>
    </ligand>
</feature>
<feature type="binding site" evidence="1">
    <location>
        <position position="771"/>
    </location>
    <ligand>
        <name>Ca(2+)</name>
        <dbReference type="ChEBI" id="CHEBI:29108"/>
        <label>1</label>
    </ligand>
</feature>
<feature type="binding site" evidence="1">
    <location>
        <position position="796"/>
    </location>
    <ligand>
        <name>Ca(2+)</name>
        <dbReference type="ChEBI" id="CHEBI:29108"/>
        <label>2</label>
    </ligand>
</feature>
<feature type="binding site" evidence="1">
    <location>
        <position position="799"/>
    </location>
    <ligand>
        <name>Ca(2+)</name>
        <dbReference type="ChEBI" id="CHEBI:29108"/>
        <label>1</label>
    </ligand>
</feature>
<feature type="binding site" evidence="1">
    <location>
        <position position="800"/>
    </location>
    <ligand>
        <name>Ca(2+)</name>
        <dbReference type="ChEBI" id="CHEBI:29108"/>
        <label>1</label>
    </ligand>
</feature>
<feature type="binding site" evidence="1">
    <location>
        <position position="800"/>
    </location>
    <ligand>
        <name>Ca(2+)</name>
        <dbReference type="ChEBI" id="CHEBI:29108"/>
        <label>2</label>
    </ligand>
</feature>
<feature type="binding site" evidence="1">
    <location>
        <position position="908"/>
    </location>
    <ligand>
        <name>Ca(2+)</name>
        <dbReference type="ChEBI" id="CHEBI:29108"/>
        <label>1</label>
    </ligand>
</feature>
<feature type="splice variant" id="VSP_060853" description="In isoform SERCA3B." evidence="4">
    <original>EEDKK</original>
    <variation>ILRTVRNTWSGEHQLKTCRTPEQGRRGQEMNDTKEMLQAKGPQTCNSD</variation>
    <location>
        <begin position="995"/>
        <end position="999"/>
    </location>
</feature>